<sequence>MYEWKLNEIVDSGVCARCGTCTIVCPNGILTFDERPKLIDECLRKGHGMCFEVCPRVSSAKYQIKIREKFYEKYYYAKSDIEGQDGGVVTAFLKYLLENGKIDGAIVVGDECWKPVSLVVQNAEDLLKTAKSKYAISTLDALRKAGEMGLEKVAVVGLPCQINGLRKLQYFPYHAKHDLELGRNGKPVKLPKIEYLIGLFCTEKFRYDNMKEVLSKHGIDIEKVEKFDIKKGKLLVYVNGEKKEFDLKEFEICSGCKMCRDFDAEMADVSVGCVGSPDGYSTIIIRTEKGEEIKNAVELKEGVNLEEIEKLRQLKLKRFKKEVERRRENNEYVSFYWTADYGGIGKRADGTYFIRVRAKPGGWYKPEEIKEILDIAEEYNAKIKVTDRAGYELHGISGFDVEDIVLRLREKGLLTGSEGPLVRATLACPGGGNCSSGLVDTTELARIIEDNFKERPAPYKFKIAISGCPNGCVRPQVHDIGIAGVKYPKVNEEKCNGCGRCAEVCKVEAIDIRGETSYTNYNVCVGCGKCIKNCPNEAREVKEEGYLVYVGGKTGREVVEGVKMKLMSVDEIINFIDKVLVVYGKYAEKPQRERLAAVMKRVGYGKFLEEVKELMKKEIC</sequence>
<gene>
    <name evidence="5" type="primary">fsr</name>
    <name type="ordered locus">MJ0870</name>
</gene>
<reference key="1">
    <citation type="journal article" date="1996" name="Science">
        <title>Complete genome sequence of the methanogenic archaeon, Methanococcus jannaschii.</title>
        <authorList>
            <person name="Bult C.J."/>
            <person name="White O."/>
            <person name="Olsen G.J."/>
            <person name="Zhou L."/>
            <person name="Fleischmann R.D."/>
            <person name="Sutton G.G."/>
            <person name="Blake J.A."/>
            <person name="FitzGerald L.M."/>
            <person name="Clayton R.A."/>
            <person name="Gocayne J.D."/>
            <person name="Kerlavage A.R."/>
            <person name="Dougherty B.A."/>
            <person name="Tomb J.-F."/>
            <person name="Adams M.D."/>
            <person name="Reich C.I."/>
            <person name="Overbeek R."/>
            <person name="Kirkness E.F."/>
            <person name="Weinstock K.G."/>
            <person name="Merrick J.M."/>
            <person name="Glodek A."/>
            <person name="Scott J.L."/>
            <person name="Geoghagen N.S.M."/>
            <person name="Weidman J.F."/>
            <person name="Fuhrmann J.L."/>
            <person name="Nguyen D."/>
            <person name="Utterback T.R."/>
            <person name="Kelley J.M."/>
            <person name="Peterson J.D."/>
            <person name="Sadow P.W."/>
            <person name="Hanna M.C."/>
            <person name="Cotton M.D."/>
            <person name="Roberts K.M."/>
            <person name="Hurst M.A."/>
            <person name="Kaine B.P."/>
            <person name="Borodovsky M."/>
            <person name="Klenk H.-P."/>
            <person name="Fraser C.M."/>
            <person name="Smith H.O."/>
            <person name="Woese C.R."/>
            <person name="Venter J.C."/>
        </authorList>
    </citation>
    <scope>NUCLEOTIDE SEQUENCE [LARGE SCALE GENOMIC DNA]</scope>
    <source>
        <strain>ATCC 43067 / DSM 2661 / JAL-1 / JCM 10045 / NBRC 100440</strain>
    </source>
</reference>
<reference key="2">
    <citation type="journal article" date="2005" name="J. Biol. Chem.">
        <title>A new type of sulfite reductase, a novel coenzyme F420-dependent enzyme, from the methanarchaeon Methanocaldococcus jannaschii.</title>
        <authorList>
            <person name="Johnson E.F."/>
            <person name="Mukhopadhyay B."/>
        </authorList>
    </citation>
    <scope>FUNCTION</scope>
    <scope>CATALYTIC ACTIVITY</scope>
    <scope>BIOPHYSICOCHEMICAL PROPERTIES</scope>
    <scope>INDUCTION</scope>
    <scope>DOMAIN</scope>
    <scope>IDENTIFICATION BY MASS SPECTROMETRY</scope>
</reference>
<reference key="3">
    <citation type="journal article" date="2008" name="Appl. Environ. Microbiol.">
        <title>Coenzyme F420-dependent sulfite reductase-enabled sulfite detoxification and use of sulfite as a sole sulfur source by Methanococcus maripaludis.</title>
        <authorList>
            <person name="Johnson E.F."/>
            <person name="Mukhopadhyay B."/>
        </authorList>
    </citation>
    <scope>FUNCTION</scope>
    <scope>EXPRESSION IN M.MARIPALUDIS</scope>
</reference>
<keyword id="KW-0002">3D-structure</keyword>
<keyword id="KW-0004">4Fe-4S</keyword>
<keyword id="KW-0349">Heme</keyword>
<keyword id="KW-0408">Iron</keyword>
<keyword id="KW-0411">Iron-sulfur</keyword>
<keyword id="KW-0479">Metal-binding</keyword>
<keyword id="KW-0560">Oxidoreductase</keyword>
<keyword id="KW-1185">Reference proteome</keyword>
<keyword id="KW-0677">Repeat</keyword>
<protein>
    <recommendedName>
        <fullName evidence="5">Coenzyme F420-dependent sulfite reductase</fullName>
        <ecNumber evidence="3">1.8.98.3</ecNumber>
    </recommendedName>
    <alternativeName>
        <fullName evidence="6">Sulfite reductase (coenzyme F420)</fullName>
    </alternativeName>
</protein>
<evidence type="ECO:0000250" key="1">
    <source>
        <dbReference type="UniProtKB" id="Q59109"/>
    </source>
</evidence>
<evidence type="ECO:0000255" key="2">
    <source>
        <dbReference type="PROSITE-ProRule" id="PRU00711"/>
    </source>
</evidence>
<evidence type="ECO:0000269" key="3">
    <source>
    </source>
</evidence>
<evidence type="ECO:0000269" key="4">
    <source>
    </source>
</evidence>
<evidence type="ECO:0000303" key="5">
    <source>
    </source>
</evidence>
<evidence type="ECO:0000305" key="6"/>
<evidence type="ECO:0007829" key="7">
    <source>
        <dbReference type="PDB" id="7NP8"/>
    </source>
</evidence>
<organism>
    <name type="scientific">Methanocaldococcus jannaschii (strain ATCC 43067 / DSM 2661 / JAL-1 / JCM 10045 / NBRC 100440)</name>
    <name type="common">Methanococcus jannaschii</name>
    <dbReference type="NCBI Taxonomy" id="243232"/>
    <lineage>
        <taxon>Archaea</taxon>
        <taxon>Methanobacteriati</taxon>
        <taxon>Methanobacteriota</taxon>
        <taxon>Methanomada group</taxon>
        <taxon>Methanococci</taxon>
        <taxon>Methanococcales</taxon>
        <taxon>Methanocaldococcaceae</taxon>
        <taxon>Methanocaldococcus</taxon>
    </lineage>
</organism>
<dbReference type="EC" id="1.8.98.3" evidence="3"/>
<dbReference type="EMBL" id="L77117">
    <property type="protein sequence ID" value="AAB98876.1"/>
    <property type="molecule type" value="Genomic_DNA"/>
</dbReference>
<dbReference type="PIR" id="F64408">
    <property type="entry name" value="F64408"/>
</dbReference>
<dbReference type="RefSeq" id="WP_010870385.1">
    <property type="nucleotide sequence ID" value="NC_000909.1"/>
</dbReference>
<dbReference type="PDB" id="7NP8">
    <property type="method" value="X-ray"/>
    <property type="resolution" value="2.30 A"/>
    <property type="chains" value="A/B/C/D=1-620"/>
</dbReference>
<dbReference type="PDBsum" id="7NP8"/>
<dbReference type="SMR" id="Q58280"/>
<dbReference type="STRING" id="243232.MJ_0870"/>
<dbReference type="PaxDb" id="243232-MJ_0870"/>
<dbReference type="EnsemblBacteria" id="AAB98876">
    <property type="protein sequence ID" value="AAB98876"/>
    <property type="gene ID" value="MJ_0870"/>
</dbReference>
<dbReference type="GeneID" id="1451759"/>
<dbReference type="KEGG" id="mja:MJ_0870"/>
<dbReference type="eggNOG" id="arCOG02061">
    <property type="taxonomic scope" value="Archaea"/>
</dbReference>
<dbReference type="HOGENOM" id="CLU_428041_0_0_2"/>
<dbReference type="InParanoid" id="Q58280"/>
<dbReference type="OrthoDB" id="15347at2157"/>
<dbReference type="BRENDA" id="1.8.98.3">
    <property type="organism ID" value="3260"/>
</dbReference>
<dbReference type="Proteomes" id="UP000000805">
    <property type="component" value="Chromosome"/>
</dbReference>
<dbReference type="GO" id="GO:0051539">
    <property type="term" value="F:4 iron, 4 sulfur cluster binding"/>
    <property type="evidence" value="ECO:0007669"/>
    <property type="project" value="UniProtKB-KW"/>
</dbReference>
<dbReference type="GO" id="GO:0020037">
    <property type="term" value="F:heme binding"/>
    <property type="evidence" value="ECO:0007669"/>
    <property type="project" value="InterPro"/>
</dbReference>
<dbReference type="GO" id="GO:0046872">
    <property type="term" value="F:metal ion binding"/>
    <property type="evidence" value="ECO:0007669"/>
    <property type="project" value="UniProtKB-KW"/>
</dbReference>
<dbReference type="GO" id="GO:0052592">
    <property type="term" value="F:oxidoreductase activity, acting on CH or CH2 groups, with an iron-sulfur protein as acceptor"/>
    <property type="evidence" value="ECO:0000318"/>
    <property type="project" value="GO_Central"/>
</dbReference>
<dbReference type="Gene3D" id="3.10.450.750">
    <property type="match status" value="1"/>
</dbReference>
<dbReference type="Gene3D" id="3.30.70.20">
    <property type="match status" value="2"/>
</dbReference>
<dbReference type="Gene3D" id="3.30.413.10">
    <property type="entry name" value="Sulfite Reductase Hemoprotein, domain 1"/>
    <property type="match status" value="1"/>
</dbReference>
<dbReference type="InterPro" id="IPR017896">
    <property type="entry name" value="4Fe4S_Fe-S-bd"/>
</dbReference>
<dbReference type="InterPro" id="IPR017900">
    <property type="entry name" value="4Fe4S_Fe_S_CS"/>
</dbReference>
<dbReference type="InterPro" id="IPR007516">
    <property type="entry name" value="Co_F420_Hydgase/DH_bsu_N"/>
</dbReference>
<dbReference type="InterPro" id="IPR045220">
    <property type="entry name" value="FRHB/FDHB/HCAR-like"/>
</dbReference>
<dbReference type="InterPro" id="IPR007525">
    <property type="entry name" value="FrhB_FdhB_C"/>
</dbReference>
<dbReference type="InterPro" id="IPR005117">
    <property type="entry name" value="NiRdtase/SiRdtase_haem-b_fer"/>
</dbReference>
<dbReference type="InterPro" id="IPR036136">
    <property type="entry name" value="Nit/Sulf_reduc_fer-like_dom_sf"/>
</dbReference>
<dbReference type="InterPro" id="IPR006067">
    <property type="entry name" value="NO2/SO3_Rdtase_4Fe4S_dom"/>
</dbReference>
<dbReference type="InterPro" id="IPR045854">
    <property type="entry name" value="NO2/SO3_Rdtase_4Fe4S_sf"/>
</dbReference>
<dbReference type="InterPro" id="IPR006066">
    <property type="entry name" value="NO2/SO3_Rdtase_FeS/sirohaem_BS"/>
</dbReference>
<dbReference type="PANTHER" id="PTHR31332">
    <property type="entry name" value="7-HYDROXYMETHYL CHLOROPHYLL A REDUCTASE, CHLOROPLASTIC"/>
    <property type="match status" value="1"/>
</dbReference>
<dbReference type="PANTHER" id="PTHR31332:SF0">
    <property type="entry name" value="7-HYDROXYMETHYL CHLOROPHYLL A REDUCTASE, CHLOROPLASTIC"/>
    <property type="match status" value="1"/>
</dbReference>
<dbReference type="Pfam" id="PF00037">
    <property type="entry name" value="Fer4"/>
    <property type="match status" value="2"/>
</dbReference>
<dbReference type="Pfam" id="PF12800">
    <property type="entry name" value="Fer4_4"/>
    <property type="match status" value="1"/>
</dbReference>
<dbReference type="Pfam" id="PF04432">
    <property type="entry name" value="FrhB_FdhB_C"/>
    <property type="match status" value="1"/>
</dbReference>
<dbReference type="Pfam" id="PF04422">
    <property type="entry name" value="FrhB_FdhB_N"/>
    <property type="match status" value="1"/>
</dbReference>
<dbReference type="Pfam" id="PF01077">
    <property type="entry name" value="NIR_SIR"/>
    <property type="match status" value="1"/>
</dbReference>
<dbReference type="Pfam" id="PF03460">
    <property type="entry name" value="NIR_SIR_ferr"/>
    <property type="match status" value="1"/>
</dbReference>
<dbReference type="PRINTS" id="PR00397">
    <property type="entry name" value="SIROHAEM"/>
</dbReference>
<dbReference type="SUPFAM" id="SSF54862">
    <property type="entry name" value="4Fe-4S ferredoxins"/>
    <property type="match status" value="2"/>
</dbReference>
<dbReference type="SUPFAM" id="SSF56014">
    <property type="entry name" value="Nitrite and sulphite reductase 4Fe-4S domain-like"/>
    <property type="match status" value="1"/>
</dbReference>
<dbReference type="SUPFAM" id="SSF55124">
    <property type="entry name" value="Nitrite/Sulfite reductase N-terminal domain-like"/>
    <property type="match status" value="1"/>
</dbReference>
<dbReference type="PROSITE" id="PS00198">
    <property type="entry name" value="4FE4S_FER_1"/>
    <property type="match status" value="2"/>
</dbReference>
<dbReference type="PROSITE" id="PS51379">
    <property type="entry name" value="4FE4S_FER_2"/>
    <property type="match status" value="3"/>
</dbReference>
<dbReference type="PROSITE" id="PS00365">
    <property type="entry name" value="NIR_SIR"/>
    <property type="match status" value="1"/>
</dbReference>
<accession>Q58280</accession>
<feature type="chain" id="PRO_0000199970" description="Coenzyme F420-dependent sulfite reductase">
    <location>
        <begin position="1"/>
        <end position="620"/>
    </location>
</feature>
<feature type="domain" description="4Fe-4S ferredoxin-type 1" evidence="2">
    <location>
        <begin position="6"/>
        <end position="35"/>
    </location>
</feature>
<feature type="domain" description="4Fe-4S ferredoxin-type 2" evidence="2">
    <location>
        <begin position="486"/>
        <end position="515"/>
    </location>
</feature>
<feature type="domain" description="4Fe-4S ferredoxin-type 3" evidence="2">
    <location>
        <begin position="520"/>
        <end position="544"/>
    </location>
</feature>
<feature type="binding site" evidence="2">
    <location>
        <position position="15"/>
    </location>
    <ligand>
        <name>[4Fe-4S] cluster</name>
        <dbReference type="ChEBI" id="CHEBI:49883"/>
        <label>1</label>
    </ligand>
</feature>
<feature type="binding site" evidence="2">
    <location>
        <position position="18"/>
    </location>
    <ligand>
        <name>[4Fe-4S] cluster</name>
        <dbReference type="ChEBI" id="CHEBI:49883"/>
        <label>1</label>
    </ligand>
</feature>
<feature type="binding site" evidence="2">
    <location>
        <position position="21"/>
    </location>
    <ligand>
        <name>[4Fe-4S] cluster</name>
        <dbReference type="ChEBI" id="CHEBI:49883"/>
        <label>1</label>
    </ligand>
</feature>
<feature type="binding site" evidence="2">
    <location>
        <position position="25"/>
    </location>
    <ligand>
        <name>[4Fe-4S] cluster</name>
        <dbReference type="ChEBI" id="CHEBI:49883"/>
        <label>1</label>
    </ligand>
</feature>
<feature type="binding site" evidence="1">
    <location>
        <position position="428"/>
    </location>
    <ligand>
        <name>[4Fe-4S] cluster</name>
        <dbReference type="ChEBI" id="CHEBI:49883"/>
        <label>2</label>
    </ligand>
</feature>
<feature type="binding site" evidence="1">
    <location>
        <position position="434"/>
    </location>
    <ligand>
        <name>[4Fe-4S] cluster</name>
        <dbReference type="ChEBI" id="CHEBI:49883"/>
        <label>2</label>
    </ligand>
</feature>
<feature type="binding site" evidence="1">
    <location>
        <position position="468"/>
    </location>
    <ligand>
        <name>[4Fe-4S] cluster</name>
        <dbReference type="ChEBI" id="CHEBI:49883"/>
        <label>2</label>
    </ligand>
</feature>
<feature type="binding site" evidence="1">
    <location>
        <position position="472"/>
    </location>
    <ligand>
        <name>[4Fe-4S] cluster</name>
        <dbReference type="ChEBI" id="CHEBI:49883"/>
        <label>2</label>
    </ligand>
</feature>
<feature type="binding site" description="axial binding residue" evidence="1">
    <location>
        <position position="472"/>
    </location>
    <ligand>
        <name>siroheme</name>
        <dbReference type="ChEBI" id="CHEBI:60052"/>
    </ligand>
    <ligandPart>
        <name>Fe</name>
        <dbReference type="ChEBI" id="CHEBI:18248"/>
    </ligandPart>
</feature>
<feature type="binding site" evidence="2">
    <location>
        <position position="495"/>
    </location>
    <ligand>
        <name>[4Fe-4S] cluster</name>
        <dbReference type="ChEBI" id="CHEBI:49883"/>
        <label>3</label>
    </ligand>
</feature>
<feature type="binding site" evidence="2">
    <location>
        <position position="498"/>
    </location>
    <ligand>
        <name>[4Fe-4S] cluster</name>
        <dbReference type="ChEBI" id="CHEBI:49883"/>
        <label>3</label>
    </ligand>
</feature>
<feature type="binding site" evidence="2">
    <location>
        <position position="501"/>
    </location>
    <ligand>
        <name>[4Fe-4S] cluster</name>
        <dbReference type="ChEBI" id="CHEBI:49883"/>
        <label>3</label>
    </ligand>
</feature>
<feature type="binding site" evidence="2">
    <location>
        <position position="505"/>
    </location>
    <ligand>
        <name>[4Fe-4S] cluster</name>
        <dbReference type="ChEBI" id="CHEBI:49883"/>
        <label>3</label>
    </ligand>
</feature>
<feature type="binding site" evidence="2">
    <location>
        <position position="524"/>
    </location>
    <ligand>
        <name>[4Fe-4S] cluster</name>
        <dbReference type="ChEBI" id="CHEBI:49883"/>
        <label>4</label>
    </ligand>
</feature>
<feature type="binding site" evidence="2">
    <location>
        <position position="527"/>
    </location>
    <ligand>
        <name>[4Fe-4S] cluster</name>
        <dbReference type="ChEBI" id="CHEBI:49883"/>
        <label>4</label>
    </ligand>
</feature>
<feature type="binding site" evidence="2">
    <location>
        <position position="530"/>
    </location>
    <ligand>
        <name>[4Fe-4S] cluster</name>
        <dbReference type="ChEBI" id="CHEBI:49883"/>
        <label>4</label>
    </ligand>
</feature>
<feature type="binding site" evidence="2">
    <location>
        <position position="534"/>
    </location>
    <ligand>
        <name>[4Fe-4S] cluster</name>
        <dbReference type="ChEBI" id="CHEBI:49883"/>
        <label>4</label>
    </ligand>
</feature>
<feature type="helix" evidence="7">
    <location>
        <begin position="7"/>
        <end position="11"/>
    </location>
</feature>
<feature type="helix" evidence="7">
    <location>
        <begin position="20"/>
        <end position="23"/>
    </location>
</feature>
<feature type="strand" evidence="7">
    <location>
        <begin position="30"/>
        <end position="40"/>
    </location>
</feature>
<feature type="turn" evidence="7">
    <location>
        <begin position="43"/>
        <end position="48"/>
    </location>
</feature>
<feature type="helix" evidence="7">
    <location>
        <begin position="49"/>
        <end position="53"/>
    </location>
</feature>
<feature type="turn" evidence="7">
    <location>
        <begin position="55"/>
        <end position="57"/>
    </location>
</feature>
<feature type="helix" evidence="7">
    <location>
        <begin position="61"/>
        <end position="68"/>
    </location>
</feature>
<feature type="strand" evidence="7">
    <location>
        <begin position="73"/>
        <end position="77"/>
    </location>
</feature>
<feature type="strand" evidence="7">
    <location>
        <begin position="84"/>
        <end position="86"/>
    </location>
</feature>
<feature type="helix" evidence="7">
    <location>
        <begin position="88"/>
        <end position="98"/>
    </location>
</feature>
<feature type="strand" evidence="7">
    <location>
        <begin position="103"/>
        <end position="111"/>
    </location>
</feature>
<feature type="strand" evidence="7">
    <location>
        <begin position="114"/>
        <end position="120"/>
    </location>
</feature>
<feature type="helix" evidence="7">
    <location>
        <begin position="124"/>
        <end position="129"/>
    </location>
</feature>
<feature type="helix" evidence="7">
    <location>
        <begin position="140"/>
        <end position="148"/>
    </location>
</feature>
<feature type="strand" evidence="7">
    <location>
        <begin position="151"/>
        <end position="157"/>
    </location>
</feature>
<feature type="helix" evidence="7">
    <location>
        <begin position="159"/>
        <end position="169"/>
    </location>
</feature>
<feature type="helix" evidence="7">
    <location>
        <begin position="171"/>
        <end position="175"/>
    </location>
</feature>
<feature type="strand" evidence="7">
    <location>
        <begin position="192"/>
        <end position="199"/>
    </location>
</feature>
<feature type="helix" evidence="7">
    <location>
        <begin position="207"/>
        <end position="216"/>
    </location>
</feature>
<feature type="helix" evidence="7">
    <location>
        <begin position="221"/>
        <end position="223"/>
    </location>
</feature>
<feature type="strand" evidence="7">
    <location>
        <begin position="224"/>
        <end position="230"/>
    </location>
</feature>
<feature type="strand" evidence="7">
    <location>
        <begin position="233"/>
        <end position="238"/>
    </location>
</feature>
<feature type="strand" evidence="7">
    <location>
        <begin position="241"/>
        <end position="246"/>
    </location>
</feature>
<feature type="helix" evidence="7">
    <location>
        <begin position="247"/>
        <end position="249"/>
    </location>
</feature>
<feature type="helix" evidence="7">
    <location>
        <begin position="254"/>
        <end position="257"/>
    </location>
</feature>
<feature type="strand" evidence="7">
    <location>
        <begin position="267"/>
        <end position="273"/>
    </location>
</feature>
<feature type="strand" evidence="7">
    <location>
        <begin position="281"/>
        <end position="285"/>
    </location>
</feature>
<feature type="helix" evidence="7">
    <location>
        <begin position="290"/>
        <end position="295"/>
    </location>
</feature>
<feature type="helix" evidence="7">
    <location>
        <begin position="305"/>
        <end position="328"/>
    </location>
</feature>
<feature type="helix" evidence="7">
    <location>
        <begin position="336"/>
        <end position="340"/>
    </location>
</feature>
<feature type="strand" evidence="7">
    <location>
        <begin position="341"/>
        <end position="347"/>
    </location>
</feature>
<feature type="strand" evidence="7">
    <location>
        <begin position="352"/>
        <end position="356"/>
    </location>
</feature>
<feature type="helix" evidence="7">
    <location>
        <begin position="360"/>
        <end position="362"/>
    </location>
</feature>
<feature type="helix" evidence="7">
    <location>
        <begin position="366"/>
        <end position="379"/>
    </location>
</feature>
<feature type="strand" evidence="7">
    <location>
        <begin position="382"/>
        <end position="385"/>
    </location>
</feature>
<feature type="strand" evidence="7">
    <location>
        <begin position="391"/>
        <end position="396"/>
    </location>
</feature>
<feature type="turn" evidence="7">
    <location>
        <begin position="398"/>
        <end position="400"/>
    </location>
</feature>
<feature type="helix" evidence="7">
    <location>
        <begin position="401"/>
        <end position="410"/>
    </location>
</feature>
<feature type="strand" evidence="7">
    <location>
        <begin position="419"/>
        <end position="422"/>
    </location>
</feature>
<feature type="turn" evidence="7">
    <location>
        <begin position="431"/>
        <end position="433"/>
    </location>
</feature>
<feature type="helix" evidence="7">
    <location>
        <begin position="442"/>
        <end position="452"/>
    </location>
</feature>
<feature type="strand" evidence="7">
    <location>
        <begin position="463"/>
        <end position="468"/>
    </location>
</feature>
<feature type="helix" evidence="7">
    <location>
        <begin position="475"/>
        <end position="477"/>
    </location>
</feature>
<feature type="strand" evidence="7">
    <location>
        <begin position="478"/>
        <end position="490"/>
    </location>
</feature>
<feature type="turn" evidence="7">
    <location>
        <begin position="492"/>
        <end position="494"/>
    </location>
</feature>
<feature type="helix" evidence="7">
    <location>
        <begin position="500"/>
        <end position="504"/>
    </location>
</feature>
<feature type="strand" evidence="7">
    <location>
        <begin position="510"/>
        <end position="513"/>
    </location>
</feature>
<feature type="strand" evidence="7">
    <location>
        <begin position="516"/>
        <end position="519"/>
    </location>
</feature>
<feature type="turn" evidence="7">
    <location>
        <begin position="521"/>
        <end position="523"/>
    </location>
</feature>
<feature type="helix" evidence="7">
    <location>
        <begin position="529"/>
        <end position="532"/>
    </location>
</feature>
<feature type="strand" evidence="7">
    <location>
        <begin position="539"/>
        <end position="551"/>
    </location>
</feature>
<feature type="strand" evidence="7">
    <location>
        <begin position="555"/>
        <end position="557"/>
    </location>
</feature>
<feature type="strand" evidence="7">
    <location>
        <begin position="562"/>
        <end position="567"/>
    </location>
</feature>
<feature type="helix" evidence="7">
    <location>
        <begin position="569"/>
        <end position="586"/>
    </location>
</feature>
<feature type="turn" evidence="7">
    <location>
        <begin position="590"/>
        <end position="592"/>
    </location>
</feature>
<feature type="helix" evidence="7">
    <location>
        <begin position="595"/>
        <end position="602"/>
    </location>
</feature>
<feature type="helix" evidence="7">
    <location>
        <begin position="604"/>
        <end position="618"/>
    </location>
</feature>
<name>FSR_METJA</name>
<proteinExistence type="evidence at protein level"/>
<comment type="function">
    <text evidence="3 4">Catalyzes the reduction of sulfite to sulfide using reduced F420 as the electron source. Involved in sulfite detoxification and assimilation. Cannot use NADH or NADPH.</text>
</comment>
<comment type="catalytic activity">
    <reaction evidence="3">
        <text>3 oxidized coenzyme F420-(gamma-L-Glu)(n) + hydrogen sulfide + 3 H2O + 2 H(+) = 3 reduced coenzyme F420-(gamma-L-Glu)(n) + sulfite</text>
        <dbReference type="Rhea" id="RHEA:42808"/>
        <dbReference type="Rhea" id="RHEA-COMP:12939"/>
        <dbReference type="Rhea" id="RHEA-COMP:14378"/>
        <dbReference type="ChEBI" id="CHEBI:15377"/>
        <dbReference type="ChEBI" id="CHEBI:15378"/>
        <dbReference type="ChEBI" id="CHEBI:17359"/>
        <dbReference type="ChEBI" id="CHEBI:29919"/>
        <dbReference type="ChEBI" id="CHEBI:133980"/>
        <dbReference type="ChEBI" id="CHEBI:139511"/>
        <dbReference type="EC" id="1.8.98.3"/>
    </reaction>
</comment>
<comment type="cofactor">
    <cofactor evidence="2">
        <name>[4Fe-4S] cluster</name>
        <dbReference type="ChEBI" id="CHEBI:49883"/>
    </cofactor>
    <text evidence="2">Binds 4 [4Fe-4S] cluster.</text>
</comment>
<comment type="cofactor">
    <cofactor evidence="1">
        <name>siroheme</name>
        <dbReference type="ChEBI" id="CHEBI:60052"/>
    </cofactor>
    <text evidence="1">Binds 1 siroheme per subunit.</text>
</comment>
<comment type="biophysicochemical properties">
    <kinetics>
        <KM evidence="3">12.2 uM for sulfite</KM>
        <KM evidence="3">21.2 uM for reduced coenzyme F420</KM>
    </kinetics>
    <phDependence>
        <text evidence="3">Optimum pH is 7.0.</text>
    </phDependence>
    <temperatureDependence>
        <text evidence="3">Optimum temperature is above 95 degrees Celsius.</text>
    </temperatureDependence>
</comment>
<comment type="induction">
    <text evidence="3">Induced by sulfite.</text>
</comment>
<comment type="domain">
    <text evidence="3">Contains an N-terminal H(2)F420 dehydrogenase domain and a C-terminal dissimilatory-type siroheme sulfite reductase domain.</text>
</comment>
<comment type="miscellaneous">
    <text evidence="4">Expression in Methanococcus maripaludis, a sulfite-sensitive methanogen, leads to sulfite detoxification and use of sulfite as a sole sulfur source by M.maripaludis.</text>
</comment>
<comment type="similarity">
    <text evidence="6">Belongs to the nitrite and sulfite reductase 4Fe-4S domain family.</text>
</comment>